<evidence type="ECO:0000269" key="1">
    <source>
    </source>
</evidence>
<evidence type="ECO:0000305" key="2"/>
<reference key="1">
    <citation type="journal article" date="1995" name="Mol. Cell. Endocrinol.">
        <title>The complete amino acid sequence of chum salmon stanniocalcin, a calcium-regulating hormone in teleosts.</title>
        <authorList>
            <person name="Yamashita K."/>
            <person name="Koide Y."/>
            <person name="Itoh H."/>
            <person name="Kawada N."/>
            <person name="Kawauchi H."/>
        </authorList>
    </citation>
    <scope>NUCLEOTIDE SEQUENCE [MRNA]</scope>
    <scope>PROTEIN SEQUENCE</scope>
    <source>
        <tissue>Stannius corpuscle</tissue>
    </source>
</reference>
<reference key="2">
    <citation type="journal article" date="1992" name="J. Comp. Physiol. B">
        <title>Chum salmon (Oncorhynchus keta) stanniocalcin inhibits in vitro intestinal calcium uptake in Atlantic cod (Gadus morhua).</title>
        <authorList>
            <person name="Sundell K."/>
            <person name="Bjoernsson B.T."/>
            <person name="Itoh H."/>
            <person name="Kawauchi H."/>
        </authorList>
    </citation>
    <scope>PROTEIN SEQUENCE OF 1-33</scope>
    <source>
        <tissue>Stannius corpuscle</tissue>
    </source>
</reference>
<reference key="3">
    <citation type="journal article" date="1999" name="Biochem. Biophys. Res. Commun.">
        <title>Assignment of disulfide linkages in chum salmon stanniocalcin.</title>
        <authorList>
            <person name="Hulova I."/>
            <person name="Kawauchi H."/>
        </authorList>
    </citation>
    <scope>DISULFIDE BONDS</scope>
</reference>
<proteinExistence type="evidence at protein level"/>
<accession>P43647</accession>
<accession>Q91427</accession>
<organism>
    <name type="scientific">Oncorhynchus keta</name>
    <name type="common">Chum salmon</name>
    <name type="synonym">Salmo keta</name>
    <dbReference type="NCBI Taxonomy" id="8018"/>
    <lineage>
        <taxon>Eukaryota</taxon>
        <taxon>Metazoa</taxon>
        <taxon>Chordata</taxon>
        <taxon>Craniata</taxon>
        <taxon>Vertebrata</taxon>
        <taxon>Euteleostomi</taxon>
        <taxon>Actinopterygii</taxon>
        <taxon>Neopterygii</taxon>
        <taxon>Teleostei</taxon>
        <taxon>Protacanthopterygii</taxon>
        <taxon>Salmoniformes</taxon>
        <taxon>Salmonidae</taxon>
        <taxon>Salmoninae</taxon>
        <taxon>Oncorhynchus</taxon>
    </lineage>
</organism>
<sequence>FSPNSPSDVARCLNGALDVGCGTFACLENSTCDTDGMHDICQLFFHTAATFNTQGKTFVKESLRCIANGVTSKVFQTIRRCGVFQRMISEVQEECYSRLDICGVARSNPEAIGEVVQVPAHFPNRYYSTLLQSLLACDEETVAVVRAGLVARLGPDMETPFQLLQNKHCSQGSNQGPNS</sequence>
<protein>
    <recommendedName>
        <fullName>Stanniocalcin</fullName>
        <shortName>STC</shortName>
    </recommendedName>
    <alternativeName>
        <fullName>Corpuscles of Stannius protein</fullName>
        <shortName>CS</shortName>
    </alternativeName>
    <alternativeName>
        <fullName>Hypocalcin</fullName>
    </alternativeName>
    <alternativeName>
        <fullName>Teleocalcin</fullName>
    </alternativeName>
</protein>
<name>STC_ONCKE</name>
<gene>
    <name type="primary">stc</name>
</gene>
<dbReference type="EMBL" id="S80134">
    <property type="protein sequence ID" value="AAB35648.2"/>
    <property type="molecule type" value="mRNA"/>
</dbReference>
<dbReference type="SMR" id="P43647"/>
<dbReference type="GlyCosmos" id="P43647">
    <property type="glycosylation" value="1 site, No reported glycans"/>
</dbReference>
<dbReference type="GO" id="GO:0005615">
    <property type="term" value="C:extracellular space"/>
    <property type="evidence" value="ECO:0007669"/>
    <property type="project" value="TreeGrafter"/>
</dbReference>
<dbReference type="GO" id="GO:0005179">
    <property type="term" value="F:hormone activity"/>
    <property type="evidence" value="ECO:0007669"/>
    <property type="project" value="UniProtKB-KW"/>
</dbReference>
<dbReference type="GO" id="GO:0006816">
    <property type="term" value="P:calcium ion transport"/>
    <property type="evidence" value="ECO:0007669"/>
    <property type="project" value="UniProtKB-KW"/>
</dbReference>
<dbReference type="GO" id="GO:0006874">
    <property type="term" value="P:intracellular calcium ion homeostasis"/>
    <property type="evidence" value="ECO:0007669"/>
    <property type="project" value="TreeGrafter"/>
</dbReference>
<dbReference type="InterPro" id="IPR004978">
    <property type="entry name" value="Stanniocalcin"/>
</dbReference>
<dbReference type="PANTHER" id="PTHR11245">
    <property type="entry name" value="STANNIOCALCIN"/>
    <property type="match status" value="1"/>
</dbReference>
<dbReference type="PANTHER" id="PTHR11245:SF7">
    <property type="entry name" value="STANNIOCALCIN"/>
    <property type="match status" value="1"/>
</dbReference>
<dbReference type="Pfam" id="PF03298">
    <property type="entry name" value="Stanniocalcin"/>
    <property type="match status" value="1"/>
</dbReference>
<feature type="chain" id="PRO_0000182020" description="Stanniocalcin">
    <location>
        <begin position="1"/>
        <end position="179"/>
    </location>
</feature>
<feature type="glycosylation site" description="N-linked (GlcNAc...) asparagine">
    <location>
        <position position="29"/>
    </location>
</feature>
<feature type="disulfide bond" evidence="1">
    <location>
        <begin position="12"/>
        <end position="26"/>
    </location>
</feature>
<feature type="disulfide bond" evidence="1">
    <location>
        <begin position="21"/>
        <end position="41"/>
    </location>
</feature>
<feature type="disulfide bond" evidence="1">
    <location>
        <begin position="32"/>
        <end position="81"/>
    </location>
</feature>
<feature type="disulfide bond" evidence="1">
    <location>
        <begin position="65"/>
        <end position="95"/>
    </location>
</feature>
<feature type="disulfide bond" evidence="1">
    <location>
        <begin position="102"/>
        <end position="137"/>
    </location>
</feature>
<feature type="disulfide bond" description="Interchain" evidence="1">
    <location>
        <position position="169"/>
    </location>
</feature>
<feature type="sequence conflict" description="In Ref. 1; AA sequence." evidence="2" ref="1">
    <original>P</original>
    <variation>L</variation>
    <location>
        <position position="160"/>
    </location>
</feature>
<feature type="sequence conflict" description="In Ref. 1; AA sequence." evidence="2" ref="1">
    <original>S</original>
    <variation>P</variation>
    <location>
        <position position="170"/>
    </location>
</feature>
<keyword id="KW-0106">Calcium</keyword>
<keyword id="KW-0109">Calcium transport</keyword>
<keyword id="KW-0903">Direct protein sequencing</keyword>
<keyword id="KW-1015">Disulfide bond</keyword>
<keyword id="KW-0325">Glycoprotein</keyword>
<keyword id="KW-0372">Hormone</keyword>
<keyword id="KW-0406">Ion transport</keyword>
<keyword id="KW-0964">Secreted</keyword>
<keyword id="KW-0813">Transport</keyword>
<comment type="function">
    <text>Its primary function is the prevention of hypercalcemia. Upon release into the circulation, it lowers calcium transport by the gills, thereby reducing its rate of influx from the environment into the extracellular compartment. STC also stimulates phosphate reabsorption by renal proximal tubules. The consequence of this action is increased levels of plasma phosphate, which combines with excess calcium and promotes its disposal into bone and scales.</text>
</comment>
<comment type="subunit">
    <text evidence="1">Homodimer; disulfide-linked.</text>
</comment>
<comment type="subcellular location">
    <subcellularLocation>
        <location>Secreted</location>
    </subcellularLocation>
</comment>
<comment type="tissue specificity">
    <text>Produced and secreted by the corpuscles of Stannius.</text>
</comment>
<comment type="similarity">
    <text evidence="2">Belongs to the stanniocalcin family.</text>
</comment>